<dbReference type="EC" id="1.18.1.2" evidence="1"/>
<dbReference type="EMBL" id="AE014074">
    <property type="protein sequence ID" value="AAM79182.1"/>
    <property type="molecule type" value="Genomic_DNA"/>
</dbReference>
<dbReference type="RefSeq" id="WP_011054365.1">
    <property type="nucleotide sequence ID" value="NC_004070.1"/>
</dbReference>
<dbReference type="SMR" id="P0DB06"/>
<dbReference type="KEGG" id="spg:SpyM3_0575"/>
<dbReference type="HOGENOM" id="CLU_031864_5_5_9"/>
<dbReference type="Proteomes" id="UP000000564">
    <property type="component" value="Chromosome"/>
</dbReference>
<dbReference type="GO" id="GO:0004324">
    <property type="term" value="F:ferredoxin-NADP+ reductase activity"/>
    <property type="evidence" value="ECO:0007669"/>
    <property type="project" value="UniProtKB-UniRule"/>
</dbReference>
<dbReference type="GO" id="GO:0050660">
    <property type="term" value="F:flavin adenine dinucleotide binding"/>
    <property type="evidence" value="ECO:0007669"/>
    <property type="project" value="UniProtKB-UniRule"/>
</dbReference>
<dbReference type="GO" id="GO:0050661">
    <property type="term" value="F:NADP binding"/>
    <property type="evidence" value="ECO:0007669"/>
    <property type="project" value="UniProtKB-UniRule"/>
</dbReference>
<dbReference type="Gene3D" id="3.50.50.60">
    <property type="entry name" value="FAD/NAD(P)-binding domain"/>
    <property type="match status" value="2"/>
</dbReference>
<dbReference type="HAMAP" id="MF_01685">
    <property type="entry name" value="FENR2"/>
    <property type="match status" value="1"/>
</dbReference>
<dbReference type="InterPro" id="IPR036188">
    <property type="entry name" value="FAD/NAD-bd_sf"/>
</dbReference>
<dbReference type="InterPro" id="IPR023753">
    <property type="entry name" value="FAD/NAD-binding_dom"/>
</dbReference>
<dbReference type="InterPro" id="IPR022890">
    <property type="entry name" value="Fd--NADP_Rdtase_type_2"/>
</dbReference>
<dbReference type="InterPro" id="IPR050097">
    <property type="entry name" value="Ferredoxin-NADP_redctase_2"/>
</dbReference>
<dbReference type="PANTHER" id="PTHR48105">
    <property type="entry name" value="THIOREDOXIN REDUCTASE 1-RELATED-RELATED"/>
    <property type="match status" value="1"/>
</dbReference>
<dbReference type="Pfam" id="PF07992">
    <property type="entry name" value="Pyr_redox_2"/>
    <property type="match status" value="1"/>
</dbReference>
<dbReference type="PRINTS" id="PR00368">
    <property type="entry name" value="FADPNR"/>
</dbReference>
<dbReference type="PRINTS" id="PR00469">
    <property type="entry name" value="PNDRDTASEII"/>
</dbReference>
<dbReference type="SUPFAM" id="SSF51905">
    <property type="entry name" value="FAD/NAD(P)-binding domain"/>
    <property type="match status" value="1"/>
</dbReference>
<evidence type="ECO:0000255" key="1">
    <source>
        <dbReference type="HAMAP-Rule" id="MF_01685"/>
    </source>
</evidence>
<name>FENR_STRP3</name>
<comment type="catalytic activity">
    <reaction evidence="1">
        <text>2 reduced [2Fe-2S]-[ferredoxin] + NADP(+) + H(+) = 2 oxidized [2Fe-2S]-[ferredoxin] + NADPH</text>
        <dbReference type="Rhea" id="RHEA:20125"/>
        <dbReference type="Rhea" id="RHEA-COMP:10000"/>
        <dbReference type="Rhea" id="RHEA-COMP:10001"/>
        <dbReference type="ChEBI" id="CHEBI:15378"/>
        <dbReference type="ChEBI" id="CHEBI:33737"/>
        <dbReference type="ChEBI" id="CHEBI:33738"/>
        <dbReference type="ChEBI" id="CHEBI:57783"/>
        <dbReference type="ChEBI" id="CHEBI:58349"/>
        <dbReference type="EC" id="1.18.1.2"/>
    </reaction>
</comment>
<comment type="cofactor">
    <cofactor evidence="1">
        <name>FAD</name>
        <dbReference type="ChEBI" id="CHEBI:57692"/>
    </cofactor>
    <text evidence="1">Binds 1 FAD per subunit.</text>
</comment>
<comment type="subunit">
    <text evidence="1">Homodimer.</text>
</comment>
<comment type="similarity">
    <text evidence="1">Belongs to the ferredoxin--NADP reductase type 2 family.</text>
</comment>
<accession>P0DB06</accession>
<accession>Q878I8</accession>
<accession>Q8K7X2</accession>
<sequence>MKDKAYDITIIGGGPIGLFAAFYAGLRGVTVKIIESLSELGGQPAILYPEKMIYDIPAYPSLTGAELTENLIKQLSRFEDRTTICLKEEVLTFDKVKGGFSIRTNKAEHFSKAIIIACGNGAFAPRTLGLESEENFADHNLFYNVHQLDQFAGQKVVICGGGDSAVDWALALEDIAESVTVVHRRDAFRAHEHSVELLKASTVNLLTPYVPKALKGIGNLAEKLVIQKVKEDEVLELELDSLIVSFGFSTSNKNLKNWNLDYKRSSITVSPLFQTSQEGIFAIGDAAAYNGKVDLIATGFGEAPTAVNQAINYIYPDRDNRVVHSTSLID</sequence>
<protein>
    <recommendedName>
        <fullName evidence="1">Ferredoxin--NADP reductase</fullName>
        <shortName evidence="1">FNR</shortName>
        <shortName evidence="1">Fd-NADP(+) reductase</shortName>
        <ecNumber evidence="1">1.18.1.2</ecNumber>
    </recommendedName>
</protein>
<feature type="chain" id="PRO_0000364968" description="Ferredoxin--NADP reductase">
    <location>
        <begin position="1"/>
        <end position="330"/>
    </location>
</feature>
<feature type="binding site" evidence="1">
    <location>
        <position position="35"/>
    </location>
    <ligand>
        <name>FAD</name>
        <dbReference type="ChEBI" id="CHEBI:57692"/>
    </ligand>
</feature>
<feature type="binding site" evidence="1">
    <location>
        <position position="43"/>
    </location>
    <ligand>
        <name>FAD</name>
        <dbReference type="ChEBI" id="CHEBI:57692"/>
    </ligand>
</feature>
<feature type="binding site" evidence="1">
    <location>
        <position position="48"/>
    </location>
    <ligand>
        <name>FAD</name>
        <dbReference type="ChEBI" id="CHEBI:57692"/>
    </ligand>
</feature>
<feature type="binding site" evidence="1">
    <location>
        <position position="90"/>
    </location>
    <ligand>
        <name>FAD</name>
        <dbReference type="ChEBI" id="CHEBI:57692"/>
    </ligand>
</feature>
<feature type="binding site" evidence="1">
    <location>
        <position position="123"/>
    </location>
    <ligand>
        <name>FAD</name>
        <dbReference type="ChEBI" id="CHEBI:57692"/>
    </ligand>
</feature>
<feature type="binding site" evidence="1">
    <location>
        <position position="285"/>
    </location>
    <ligand>
        <name>FAD</name>
        <dbReference type="ChEBI" id="CHEBI:57692"/>
    </ligand>
</feature>
<feature type="binding site" evidence="1">
    <location>
        <position position="326"/>
    </location>
    <ligand>
        <name>FAD</name>
        <dbReference type="ChEBI" id="CHEBI:57692"/>
    </ligand>
</feature>
<keyword id="KW-0274">FAD</keyword>
<keyword id="KW-0285">Flavoprotein</keyword>
<keyword id="KW-0521">NADP</keyword>
<keyword id="KW-0560">Oxidoreductase</keyword>
<organism>
    <name type="scientific">Streptococcus pyogenes serotype M3 (strain ATCC BAA-595 / MGAS315)</name>
    <dbReference type="NCBI Taxonomy" id="198466"/>
    <lineage>
        <taxon>Bacteria</taxon>
        <taxon>Bacillati</taxon>
        <taxon>Bacillota</taxon>
        <taxon>Bacilli</taxon>
        <taxon>Lactobacillales</taxon>
        <taxon>Streptococcaceae</taxon>
        <taxon>Streptococcus</taxon>
    </lineage>
</organism>
<gene>
    <name type="ordered locus">SpyM3_0575</name>
</gene>
<reference key="1">
    <citation type="journal article" date="2002" name="Proc. Natl. Acad. Sci. U.S.A.">
        <title>Genome sequence of a serotype M3 strain of group A Streptococcus: phage-encoded toxins, the high-virulence phenotype, and clone emergence.</title>
        <authorList>
            <person name="Beres S.B."/>
            <person name="Sylva G.L."/>
            <person name="Barbian K.D."/>
            <person name="Lei B."/>
            <person name="Hoff J.S."/>
            <person name="Mammarella N.D."/>
            <person name="Liu M.-Y."/>
            <person name="Smoot J.C."/>
            <person name="Porcella S.F."/>
            <person name="Parkins L.D."/>
            <person name="Campbell D.S."/>
            <person name="Smith T.M."/>
            <person name="McCormick J.K."/>
            <person name="Leung D.Y.M."/>
            <person name="Schlievert P.M."/>
            <person name="Musser J.M."/>
        </authorList>
    </citation>
    <scope>NUCLEOTIDE SEQUENCE [LARGE SCALE GENOMIC DNA]</scope>
    <source>
        <strain>ATCC BAA-595 / MGAS315</strain>
    </source>
</reference>
<proteinExistence type="inferred from homology"/>